<organism>
    <name type="scientific">Rhodopseudomonas palustris (strain HaA2)</name>
    <dbReference type="NCBI Taxonomy" id="316058"/>
    <lineage>
        <taxon>Bacteria</taxon>
        <taxon>Pseudomonadati</taxon>
        <taxon>Pseudomonadota</taxon>
        <taxon>Alphaproteobacteria</taxon>
        <taxon>Hyphomicrobiales</taxon>
        <taxon>Nitrobacteraceae</taxon>
        <taxon>Rhodopseudomonas</taxon>
    </lineage>
</organism>
<comment type="function">
    <text evidence="1">Required for the formation of a threonylcarbamoyl group on adenosine at position 37 (t(6)A37) in tRNAs that read codons beginning with adenine. Is involved in the transfer of the threonylcarbamoyl moiety of threonylcarbamoyl-AMP (TC-AMP) to the N6 group of A37, together with TsaE and TsaB. TsaD likely plays a direct catalytic role in this reaction.</text>
</comment>
<comment type="catalytic activity">
    <reaction evidence="1">
        <text>L-threonylcarbamoyladenylate + adenosine(37) in tRNA = N(6)-L-threonylcarbamoyladenosine(37) in tRNA + AMP + H(+)</text>
        <dbReference type="Rhea" id="RHEA:37059"/>
        <dbReference type="Rhea" id="RHEA-COMP:10162"/>
        <dbReference type="Rhea" id="RHEA-COMP:10163"/>
        <dbReference type="ChEBI" id="CHEBI:15378"/>
        <dbReference type="ChEBI" id="CHEBI:73682"/>
        <dbReference type="ChEBI" id="CHEBI:74411"/>
        <dbReference type="ChEBI" id="CHEBI:74418"/>
        <dbReference type="ChEBI" id="CHEBI:456215"/>
        <dbReference type="EC" id="2.3.1.234"/>
    </reaction>
</comment>
<comment type="cofactor">
    <cofactor evidence="1">
        <name>Fe(2+)</name>
        <dbReference type="ChEBI" id="CHEBI:29033"/>
    </cofactor>
    <text evidence="1">Binds 1 Fe(2+) ion per subunit.</text>
</comment>
<comment type="subcellular location">
    <subcellularLocation>
        <location evidence="1">Cytoplasm</location>
    </subcellularLocation>
</comment>
<comment type="similarity">
    <text evidence="1">Belongs to the KAE1 / TsaD family.</text>
</comment>
<comment type="sequence caution" evidence="2">
    <conflict type="erroneous initiation">
        <sequence resource="EMBL-CDS" id="ABD05026"/>
    </conflict>
</comment>
<dbReference type="EC" id="2.3.1.234" evidence="1"/>
<dbReference type="EMBL" id="CP000250">
    <property type="protein sequence ID" value="ABD05026.1"/>
    <property type="status" value="ALT_INIT"/>
    <property type="molecule type" value="Genomic_DNA"/>
</dbReference>
<dbReference type="SMR" id="Q2J3D4"/>
<dbReference type="STRING" id="316058.RPB_0315"/>
<dbReference type="KEGG" id="rpb:RPB_0315"/>
<dbReference type="eggNOG" id="COG0533">
    <property type="taxonomic scope" value="Bacteria"/>
</dbReference>
<dbReference type="HOGENOM" id="CLU_023208_0_2_5"/>
<dbReference type="Proteomes" id="UP000008809">
    <property type="component" value="Chromosome"/>
</dbReference>
<dbReference type="GO" id="GO:0005737">
    <property type="term" value="C:cytoplasm"/>
    <property type="evidence" value="ECO:0007669"/>
    <property type="project" value="UniProtKB-SubCell"/>
</dbReference>
<dbReference type="GO" id="GO:0005506">
    <property type="term" value="F:iron ion binding"/>
    <property type="evidence" value="ECO:0007669"/>
    <property type="project" value="UniProtKB-UniRule"/>
</dbReference>
<dbReference type="GO" id="GO:0061711">
    <property type="term" value="F:N(6)-L-threonylcarbamoyladenine synthase activity"/>
    <property type="evidence" value="ECO:0007669"/>
    <property type="project" value="UniProtKB-EC"/>
</dbReference>
<dbReference type="GO" id="GO:0002949">
    <property type="term" value="P:tRNA threonylcarbamoyladenosine modification"/>
    <property type="evidence" value="ECO:0007669"/>
    <property type="project" value="UniProtKB-UniRule"/>
</dbReference>
<dbReference type="CDD" id="cd24133">
    <property type="entry name" value="ASKHA_NBD_TsaD_bac"/>
    <property type="match status" value="1"/>
</dbReference>
<dbReference type="FunFam" id="3.30.420.40:FF:000012">
    <property type="entry name" value="tRNA N6-adenosine threonylcarbamoyltransferase"/>
    <property type="match status" value="1"/>
</dbReference>
<dbReference type="Gene3D" id="3.30.420.40">
    <property type="match status" value="2"/>
</dbReference>
<dbReference type="HAMAP" id="MF_01445">
    <property type="entry name" value="TsaD"/>
    <property type="match status" value="1"/>
</dbReference>
<dbReference type="InterPro" id="IPR043129">
    <property type="entry name" value="ATPase_NBD"/>
</dbReference>
<dbReference type="InterPro" id="IPR000905">
    <property type="entry name" value="Gcp-like_dom"/>
</dbReference>
<dbReference type="InterPro" id="IPR017861">
    <property type="entry name" value="KAE1/TsaD"/>
</dbReference>
<dbReference type="InterPro" id="IPR017860">
    <property type="entry name" value="Peptidase_M22_CS"/>
</dbReference>
<dbReference type="InterPro" id="IPR022450">
    <property type="entry name" value="TsaD"/>
</dbReference>
<dbReference type="NCBIfam" id="TIGR00329">
    <property type="entry name" value="gcp_kae1"/>
    <property type="match status" value="1"/>
</dbReference>
<dbReference type="NCBIfam" id="TIGR03723">
    <property type="entry name" value="T6A_TsaD_YgjD"/>
    <property type="match status" value="1"/>
</dbReference>
<dbReference type="PANTHER" id="PTHR11735">
    <property type="entry name" value="TRNA N6-ADENOSINE THREONYLCARBAMOYLTRANSFERASE"/>
    <property type="match status" value="1"/>
</dbReference>
<dbReference type="PANTHER" id="PTHR11735:SF6">
    <property type="entry name" value="TRNA N6-ADENOSINE THREONYLCARBAMOYLTRANSFERASE, MITOCHONDRIAL"/>
    <property type="match status" value="1"/>
</dbReference>
<dbReference type="Pfam" id="PF00814">
    <property type="entry name" value="TsaD"/>
    <property type="match status" value="1"/>
</dbReference>
<dbReference type="PRINTS" id="PR00789">
    <property type="entry name" value="OSIALOPTASE"/>
</dbReference>
<dbReference type="SUPFAM" id="SSF53067">
    <property type="entry name" value="Actin-like ATPase domain"/>
    <property type="match status" value="2"/>
</dbReference>
<dbReference type="PROSITE" id="PS01016">
    <property type="entry name" value="GLYCOPROTEASE"/>
    <property type="match status" value="1"/>
</dbReference>
<reference key="1">
    <citation type="submission" date="2006-01" db="EMBL/GenBank/DDBJ databases">
        <title>Complete sequence of Rhodopseudomonas palustris HaA2.</title>
        <authorList>
            <consortium name="US DOE Joint Genome Institute"/>
            <person name="Copeland A."/>
            <person name="Lucas S."/>
            <person name="Lapidus A."/>
            <person name="Barry K."/>
            <person name="Detter J.C."/>
            <person name="Glavina T."/>
            <person name="Hammon N."/>
            <person name="Israni S."/>
            <person name="Pitluck S."/>
            <person name="Chain P."/>
            <person name="Malfatti S."/>
            <person name="Shin M."/>
            <person name="Vergez L."/>
            <person name="Schmutz J."/>
            <person name="Larimer F."/>
            <person name="Land M."/>
            <person name="Hauser L."/>
            <person name="Pelletier D.A."/>
            <person name="Kyrpides N."/>
            <person name="Anderson I."/>
            <person name="Oda Y."/>
            <person name="Harwood C.S."/>
            <person name="Richardson P."/>
        </authorList>
    </citation>
    <scope>NUCLEOTIDE SEQUENCE [LARGE SCALE GENOMIC DNA]</scope>
    <source>
        <strain>HaA2</strain>
    </source>
</reference>
<keyword id="KW-0012">Acyltransferase</keyword>
<keyword id="KW-0963">Cytoplasm</keyword>
<keyword id="KW-0408">Iron</keyword>
<keyword id="KW-0479">Metal-binding</keyword>
<keyword id="KW-1185">Reference proteome</keyword>
<keyword id="KW-0808">Transferase</keyword>
<keyword id="KW-0819">tRNA processing</keyword>
<proteinExistence type="inferred from homology"/>
<protein>
    <recommendedName>
        <fullName evidence="1">tRNA N6-adenosine threonylcarbamoyltransferase</fullName>
        <ecNumber evidence="1">2.3.1.234</ecNumber>
    </recommendedName>
    <alternativeName>
        <fullName evidence="1">N6-L-threonylcarbamoyladenine synthase</fullName>
        <shortName evidence="1">t(6)A synthase</shortName>
    </alternativeName>
    <alternativeName>
        <fullName evidence="1">t(6)A37 threonylcarbamoyladenosine biosynthesis protein TsaD</fullName>
    </alternativeName>
    <alternativeName>
        <fullName evidence="1">tRNA threonylcarbamoyladenosine biosynthesis protein TsaD</fullName>
    </alternativeName>
</protein>
<accession>Q2J3D4</accession>
<feature type="chain" id="PRO_0000303520" description="tRNA N6-adenosine threonylcarbamoyltransferase">
    <location>
        <begin position="1"/>
        <end position="363"/>
    </location>
</feature>
<feature type="binding site" evidence="1">
    <location>
        <position position="121"/>
    </location>
    <ligand>
        <name>Fe cation</name>
        <dbReference type="ChEBI" id="CHEBI:24875"/>
    </ligand>
</feature>
<feature type="binding site" evidence="1">
    <location>
        <position position="125"/>
    </location>
    <ligand>
        <name>Fe cation</name>
        <dbReference type="ChEBI" id="CHEBI:24875"/>
    </ligand>
</feature>
<feature type="binding site" evidence="1">
    <location>
        <begin position="143"/>
        <end position="147"/>
    </location>
    <ligand>
        <name>substrate</name>
    </ligand>
</feature>
<feature type="binding site" evidence="1">
    <location>
        <position position="176"/>
    </location>
    <ligand>
        <name>substrate</name>
    </ligand>
</feature>
<feature type="binding site" evidence="1">
    <location>
        <position position="189"/>
    </location>
    <ligand>
        <name>substrate</name>
    </ligand>
</feature>
<feature type="binding site" evidence="1">
    <location>
        <position position="287"/>
    </location>
    <ligand>
        <name>substrate</name>
    </ligand>
</feature>
<feature type="binding site" evidence="1">
    <location>
        <position position="315"/>
    </location>
    <ligand>
        <name>Fe cation</name>
        <dbReference type="ChEBI" id="CHEBI:24875"/>
    </ligand>
</feature>
<evidence type="ECO:0000255" key="1">
    <source>
        <dbReference type="HAMAP-Rule" id="MF_01445"/>
    </source>
</evidence>
<evidence type="ECO:0000305" key="2"/>
<name>TSAD_RHOP2</name>
<sequence>MTSEQTLLVLGIETTCDETAAAVVERRADGSGRILSNIVRSQTDEHAPFGGVVPEIAARAHVDLLDGIVARAMREAGTGFPELSGVAAAAGPGLIGGVIVGLTTAKAIALVHNTPLIAVNHLEAHALTPRLTDATEFPYCLFLASGGHTQIVAVRGVGDYVRLGTTVDDAIGEAFDKIAKMLGLPYPGGPQVERAAASGDAVRFAFPRPMLGRPDANFSLSGLKTAVRNEASRLTPLEPQDINDLCAGFQAAVLDSMADRLTSGLRLFRERFGAPKALVAAGGVAANQAIRRALREVAAKAQTTLIVPPPALCTDNGAMIAWAGAERLALGLTDSMDAAPRARWLLDANATAPGKFANTRAGF</sequence>
<gene>
    <name evidence="1" type="primary">tsaD</name>
    <name type="synonym">gcp</name>
    <name type="ordered locus">RPB_0315</name>
</gene>